<reference key="1">
    <citation type="journal article" date="1998" name="EMBO J.">
        <title>Disruption of the p70(s6k)/p85(s6k) gene reveals a small mouse phenotype and a new functional S6 kinase.</title>
        <authorList>
            <person name="Shima H."/>
            <person name="Pende M."/>
            <person name="Chen Y."/>
            <person name="Fumagalli S."/>
            <person name="Thomas G."/>
            <person name="Kozma S.C."/>
        </authorList>
    </citation>
    <scope>NUCLEOTIDE SEQUENCE [MRNA]</scope>
</reference>
<reference key="2">
    <citation type="journal article" date="2005" name="Science">
        <title>The transcriptional landscape of the mammalian genome.</title>
        <authorList>
            <person name="Carninci P."/>
            <person name="Kasukawa T."/>
            <person name="Katayama S."/>
            <person name="Gough J."/>
            <person name="Frith M.C."/>
            <person name="Maeda N."/>
            <person name="Oyama R."/>
            <person name="Ravasi T."/>
            <person name="Lenhard B."/>
            <person name="Wells C."/>
            <person name="Kodzius R."/>
            <person name="Shimokawa K."/>
            <person name="Bajic V.B."/>
            <person name="Brenner S.E."/>
            <person name="Batalov S."/>
            <person name="Forrest A.R."/>
            <person name="Zavolan M."/>
            <person name="Davis M.J."/>
            <person name="Wilming L.G."/>
            <person name="Aidinis V."/>
            <person name="Allen J.E."/>
            <person name="Ambesi-Impiombato A."/>
            <person name="Apweiler R."/>
            <person name="Aturaliya R.N."/>
            <person name="Bailey T.L."/>
            <person name="Bansal M."/>
            <person name="Baxter L."/>
            <person name="Beisel K.W."/>
            <person name="Bersano T."/>
            <person name="Bono H."/>
            <person name="Chalk A.M."/>
            <person name="Chiu K.P."/>
            <person name="Choudhary V."/>
            <person name="Christoffels A."/>
            <person name="Clutterbuck D.R."/>
            <person name="Crowe M.L."/>
            <person name="Dalla E."/>
            <person name="Dalrymple B.P."/>
            <person name="de Bono B."/>
            <person name="Della Gatta G."/>
            <person name="di Bernardo D."/>
            <person name="Down T."/>
            <person name="Engstrom P."/>
            <person name="Fagiolini M."/>
            <person name="Faulkner G."/>
            <person name="Fletcher C.F."/>
            <person name="Fukushima T."/>
            <person name="Furuno M."/>
            <person name="Futaki S."/>
            <person name="Gariboldi M."/>
            <person name="Georgii-Hemming P."/>
            <person name="Gingeras T.R."/>
            <person name="Gojobori T."/>
            <person name="Green R.E."/>
            <person name="Gustincich S."/>
            <person name="Harbers M."/>
            <person name="Hayashi Y."/>
            <person name="Hensch T.K."/>
            <person name="Hirokawa N."/>
            <person name="Hill D."/>
            <person name="Huminiecki L."/>
            <person name="Iacono M."/>
            <person name="Ikeo K."/>
            <person name="Iwama A."/>
            <person name="Ishikawa T."/>
            <person name="Jakt M."/>
            <person name="Kanapin A."/>
            <person name="Katoh M."/>
            <person name="Kawasawa Y."/>
            <person name="Kelso J."/>
            <person name="Kitamura H."/>
            <person name="Kitano H."/>
            <person name="Kollias G."/>
            <person name="Krishnan S.P."/>
            <person name="Kruger A."/>
            <person name="Kummerfeld S.K."/>
            <person name="Kurochkin I.V."/>
            <person name="Lareau L.F."/>
            <person name="Lazarevic D."/>
            <person name="Lipovich L."/>
            <person name="Liu J."/>
            <person name="Liuni S."/>
            <person name="McWilliam S."/>
            <person name="Madan Babu M."/>
            <person name="Madera M."/>
            <person name="Marchionni L."/>
            <person name="Matsuda H."/>
            <person name="Matsuzawa S."/>
            <person name="Miki H."/>
            <person name="Mignone F."/>
            <person name="Miyake S."/>
            <person name="Morris K."/>
            <person name="Mottagui-Tabar S."/>
            <person name="Mulder N."/>
            <person name="Nakano N."/>
            <person name="Nakauchi H."/>
            <person name="Ng P."/>
            <person name="Nilsson R."/>
            <person name="Nishiguchi S."/>
            <person name="Nishikawa S."/>
            <person name="Nori F."/>
            <person name="Ohara O."/>
            <person name="Okazaki Y."/>
            <person name="Orlando V."/>
            <person name="Pang K.C."/>
            <person name="Pavan W.J."/>
            <person name="Pavesi G."/>
            <person name="Pesole G."/>
            <person name="Petrovsky N."/>
            <person name="Piazza S."/>
            <person name="Reed J."/>
            <person name="Reid J.F."/>
            <person name="Ring B.Z."/>
            <person name="Ringwald M."/>
            <person name="Rost B."/>
            <person name="Ruan Y."/>
            <person name="Salzberg S.L."/>
            <person name="Sandelin A."/>
            <person name="Schneider C."/>
            <person name="Schoenbach C."/>
            <person name="Sekiguchi K."/>
            <person name="Semple C.A."/>
            <person name="Seno S."/>
            <person name="Sessa L."/>
            <person name="Sheng Y."/>
            <person name="Shibata Y."/>
            <person name="Shimada H."/>
            <person name="Shimada K."/>
            <person name="Silva D."/>
            <person name="Sinclair B."/>
            <person name="Sperling S."/>
            <person name="Stupka E."/>
            <person name="Sugiura K."/>
            <person name="Sultana R."/>
            <person name="Takenaka Y."/>
            <person name="Taki K."/>
            <person name="Tammoja K."/>
            <person name="Tan S.L."/>
            <person name="Tang S."/>
            <person name="Taylor M.S."/>
            <person name="Tegner J."/>
            <person name="Teichmann S.A."/>
            <person name="Ueda H.R."/>
            <person name="van Nimwegen E."/>
            <person name="Verardo R."/>
            <person name="Wei C.L."/>
            <person name="Yagi K."/>
            <person name="Yamanishi H."/>
            <person name="Zabarovsky E."/>
            <person name="Zhu S."/>
            <person name="Zimmer A."/>
            <person name="Hide W."/>
            <person name="Bult C."/>
            <person name="Grimmond S.M."/>
            <person name="Teasdale R.D."/>
            <person name="Liu E.T."/>
            <person name="Brusic V."/>
            <person name="Quackenbush J."/>
            <person name="Wahlestedt C."/>
            <person name="Mattick J.S."/>
            <person name="Hume D.A."/>
            <person name="Kai C."/>
            <person name="Sasaki D."/>
            <person name="Tomaru Y."/>
            <person name="Fukuda S."/>
            <person name="Kanamori-Katayama M."/>
            <person name="Suzuki M."/>
            <person name="Aoki J."/>
            <person name="Arakawa T."/>
            <person name="Iida J."/>
            <person name="Imamura K."/>
            <person name="Itoh M."/>
            <person name="Kato T."/>
            <person name="Kawaji H."/>
            <person name="Kawagashira N."/>
            <person name="Kawashima T."/>
            <person name="Kojima M."/>
            <person name="Kondo S."/>
            <person name="Konno H."/>
            <person name="Nakano K."/>
            <person name="Ninomiya N."/>
            <person name="Nishio T."/>
            <person name="Okada M."/>
            <person name="Plessy C."/>
            <person name="Shibata K."/>
            <person name="Shiraki T."/>
            <person name="Suzuki S."/>
            <person name="Tagami M."/>
            <person name="Waki K."/>
            <person name="Watahiki A."/>
            <person name="Okamura-Oho Y."/>
            <person name="Suzuki H."/>
            <person name="Kawai J."/>
            <person name="Hayashizaki Y."/>
        </authorList>
    </citation>
    <scope>NUCLEOTIDE SEQUENCE [LARGE SCALE MRNA]</scope>
    <source>
        <strain>C57BL/6J</strain>
        <tissue>Placenta</tissue>
    </source>
</reference>
<reference key="3">
    <citation type="journal article" date="2007" name="Proc. Natl. Acad. Sci. U.S.A.">
        <title>Large-scale phosphorylation analysis of mouse liver.</title>
        <authorList>
            <person name="Villen J."/>
            <person name="Beausoleil S.A."/>
            <person name="Gerber S.A."/>
            <person name="Gygi S.P."/>
        </authorList>
    </citation>
    <scope>PHOSPHORYLATION [LARGE SCALE ANALYSIS] AT THR-420 AND SER-423</scope>
    <scope>IDENTIFICATION BY MASS SPECTROMETRY [LARGE SCALE ANALYSIS]</scope>
    <source>
        <tissue>Liver</tissue>
    </source>
</reference>
<reference key="4">
    <citation type="journal article" date="2010" name="Cell">
        <title>A tissue-specific atlas of mouse protein phosphorylation and expression.</title>
        <authorList>
            <person name="Huttlin E.L."/>
            <person name="Jedrychowski M.P."/>
            <person name="Elias J.E."/>
            <person name="Goswami T."/>
            <person name="Rad R."/>
            <person name="Beausoleil S.A."/>
            <person name="Villen J."/>
            <person name="Haas W."/>
            <person name="Sowa M.E."/>
            <person name="Gygi S.P."/>
        </authorList>
    </citation>
    <scope>IDENTIFICATION BY MASS SPECTROMETRY [LARGE SCALE ANALYSIS]</scope>
    <source>
        <tissue>Spleen</tissue>
    </source>
</reference>
<gene>
    <name type="primary">Rps6kb2</name>
</gene>
<sequence>MAAVFDLDLETEEGSEGEGEPEFSPADVCPLGELRAAGLETVGHYEEVELTESSVNLGPERIGPHCFELLSVLGKGGYGKVFQVRKVQGTNLGKIYAMKVLRKAKIVCSAKDTAHTRAERNILESVKHPFIVELAYAFQTGGKLYLILECLSGGELFTHLEREGIFLEDTACFYLAEITLALGHLHSHGIIYRDLKPENIMLSSQGHIKLTDFGLCKESIHEGAITHTFCGTIEYMAPEILVRTGHNRAVDWWSLGALMYDMLTGSPPFTAENRKKTMDKIIKGKLVLPPYLTPDARDLAKKFLKRNPTQRIGGGLGDAADVQRHPFFRHINWDDLLARRVDPPFRPSLQSEEDVSQFDARFTRQTPVDSPDDTALSESANQAFLGFTYVAPSVLDSIKEGFSFQPKLRSPRRLNSSPRTPISPLKFSPFEGFRPSPGPPEPMEPSLPPLLPSPPSPPPTSTAPLPIRPPSGTKKSKKGRGRSGR</sequence>
<feature type="chain" id="PRO_0000086215" description="Ribosomal protein S6 kinase beta-2">
    <location>
        <begin position="1"/>
        <end position="485"/>
    </location>
</feature>
<feature type="domain" description="Protein kinase" evidence="3">
    <location>
        <begin position="67"/>
        <end position="328"/>
    </location>
</feature>
<feature type="domain" description="AGC-kinase C-terminal" evidence="4">
    <location>
        <begin position="329"/>
        <end position="399"/>
    </location>
</feature>
<feature type="region of interest" description="Disordered" evidence="6">
    <location>
        <begin position="1"/>
        <end position="26"/>
    </location>
</feature>
<feature type="region of interest" description="Disordered" evidence="6">
    <location>
        <begin position="407"/>
        <end position="485"/>
    </location>
</feature>
<feature type="short sequence motif" description="Nuclear localization signal" evidence="1">
    <location>
        <begin position="474"/>
        <end position="480"/>
    </location>
</feature>
<feature type="compositionally biased region" description="Acidic residues" evidence="6">
    <location>
        <begin position="7"/>
        <end position="21"/>
    </location>
</feature>
<feature type="compositionally biased region" description="Pro residues" evidence="6">
    <location>
        <begin position="436"/>
        <end position="469"/>
    </location>
</feature>
<feature type="compositionally biased region" description="Basic residues" evidence="6">
    <location>
        <begin position="474"/>
        <end position="485"/>
    </location>
</feature>
<feature type="active site" description="Proton acceptor" evidence="3 5">
    <location>
        <position position="194"/>
    </location>
</feature>
<feature type="binding site" evidence="3">
    <location>
        <begin position="73"/>
        <end position="81"/>
    </location>
    <ligand>
        <name>ATP</name>
        <dbReference type="ChEBI" id="CHEBI:30616"/>
    </ligand>
</feature>
<feature type="binding site" evidence="3">
    <location>
        <position position="99"/>
    </location>
    <ligand>
        <name>ATP</name>
        <dbReference type="ChEBI" id="CHEBI:30616"/>
    </ligand>
</feature>
<feature type="modified residue" description="Phosphoserine" evidence="2">
    <location>
        <position position="15"/>
    </location>
</feature>
<feature type="modified residue" description="Phosphoserine" evidence="2">
    <location>
        <position position="417"/>
    </location>
</feature>
<feature type="modified residue" description="Phosphothreonine" evidence="8">
    <location>
        <position position="420"/>
    </location>
</feature>
<feature type="modified residue" description="Phosphoserine" evidence="8">
    <location>
        <position position="423"/>
    </location>
</feature>
<feature type="modified residue" description="Phosphoserine; by PKC" evidence="2">
    <location>
        <position position="476"/>
    </location>
</feature>
<protein>
    <recommendedName>
        <fullName>Ribosomal protein S6 kinase beta-2</fullName>
        <shortName>S6K-beta-2</shortName>
        <shortName>S6K2</shortName>
        <ecNumber>2.7.11.1</ecNumber>
    </recommendedName>
    <alternativeName>
        <fullName>70 kDa ribosomal protein S6 kinase 2</fullName>
    </alternativeName>
    <alternativeName>
        <fullName>p70 ribosomal S6 kinase beta</fullName>
        <shortName>p70 S6 kinase beta</shortName>
        <shortName>p70 S6K-beta</shortName>
        <shortName>p70 S6KB</shortName>
    </alternativeName>
</protein>
<proteinExistence type="evidence at protein level"/>
<organism>
    <name type="scientific">Mus musculus</name>
    <name type="common">Mouse</name>
    <dbReference type="NCBI Taxonomy" id="10090"/>
    <lineage>
        <taxon>Eukaryota</taxon>
        <taxon>Metazoa</taxon>
        <taxon>Chordata</taxon>
        <taxon>Craniata</taxon>
        <taxon>Vertebrata</taxon>
        <taxon>Euteleostomi</taxon>
        <taxon>Mammalia</taxon>
        <taxon>Eutheria</taxon>
        <taxon>Euarchontoglires</taxon>
        <taxon>Glires</taxon>
        <taxon>Rodentia</taxon>
        <taxon>Myomorpha</taxon>
        <taxon>Muroidea</taxon>
        <taxon>Muridae</taxon>
        <taxon>Murinae</taxon>
        <taxon>Mus</taxon>
        <taxon>Mus</taxon>
    </lineage>
</organism>
<accession>Q9Z1M4</accession>
<evidence type="ECO:0000250" key="1"/>
<evidence type="ECO:0000250" key="2">
    <source>
        <dbReference type="UniProtKB" id="Q9UBS0"/>
    </source>
</evidence>
<evidence type="ECO:0000255" key="3">
    <source>
        <dbReference type="PROSITE-ProRule" id="PRU00159"/>
    </source>
</evidence>
<evidence type="ECO:0000255" key="4">
    <source>
        <dbReference type="PROSITE-ProRule" id="PRU00618"/>
    </source>
</evidence>
<evidence type="ECO:0000255" key="5">
    <source>
        <dbReference type="PROSITE-ProRule" id="PRU10027"/>
    </source>
</evidence>
<evidence type="ECO:0000256" key="6">
    <source>
        <dbReference type="SAM" id="MobiDB-lite"/>
    </source>
</evidence>
<evidence type="ECO:0000305" key="7"/>
<evidence type="ECO:0007744" key="8">
    <source>
    </source>
</evidence>
<comment type="function">
    <text evidence="2">Phosphorylates specifically ribosomal protein S6. Seems to act downstream of mTOR signaling in response to growth factors and nutrients to promote cell proliferation, cell growth and cell cycle progression in an alternative pathway regulated by MEAK7.</text>
</comment>
<comment type="catalytic activity">
    <reaction>
        <text>L-seryl-[protein] + ATP = O-phospho-L-seryl-[protein] + ADP + H(+)</text>
        <dbReference type="Rhea" id="RHEA:17989"/>
        <dbReference type="Rhea" id="RHEA-COMP:9863"/>
        <dbReference type="Rhea" id="RHEA-COMP:11604"/>
        <dbReference type="ChEBI" id="CHEBI:15378"/>
        <dbReference type="ChEBI" id="CHEBI:29999"/>
        <dbReference type="ChEBI" id="CHEBI:30616"/>
        <dbReference type="ChEBI" id="CHEBI:83421"/>
        <dbReference type="ChEBI" id="CHEBI:456216"/>
        <dbReference type="EC" id="2.7.11.1"/>
    </reaction>
</comment>
<comment type="catalytic activity">
    <reaction>
        <text>L-threonyl-[protein] + ATP = O-phospho-L-threonyl-[protein] + ADP + H(+)</text>
        <dbReference type="Rhea" id="RHEA:46608"/>
        <dbReference type="Rhea" id="RHEA-COMP:11060"/>
        <dbReference type="Rhea" id="RHEA-COMP:11605"/>
        <dbReference type="ChEBI" id="CHEBI:15378"/>
        <dbReference type="ChEBI" id="CHEBI:30013"/>
        <dbReference type="ChEBI" id="CHEBI:30616"/>
        <dbReference type="ChEBI" id="CHEBI:61977"/>
        <dbReference type="ChEBI" id="CHEBI:456216"/>
        <dbReference type="EC" id="2.7.11.1"/>
    </reaction>
</comment>
<comment type="subcellular location">
    <subcellularLocation>
        <location evidence="1">Cytoplasm</location>
    </subcellularLocation>
    <subcellularLocation>
        <location evidence="1">Nucleus</location>
    </subcellularLocation>
</comment>
<comment type="PTM">
    <text>Phosphorylated and activated by MTOR. Phosphorylation by PKC within the NLS in response to mitogenic stimuli causes cytoplasmic retention.</text>
</comment>
<comment type="similarity">
    <text evidence="7">Belongs to the protein kinase superfamily. AGC Ser/Thr protein kinase family. S6 kinase subfamily.</text>
</comment>
<dbReference type="EC" id="2.7.11.1"/>
<dbReference type="EMBL" id="AJ007938">
    <property type="protein sequence ID" value="CAA07774.1"/>
    <property type="molecule type" value="mRNA"/>
</dbReference>
<dbReference type="EMBL" id="AK014412">
    <property type="protein sequence ID" value="BAB29335.1"/>
    <property type="molecule type" value="mRNA"/>
</dbReference>
<dbReference type="CCDS" id="CCDS29419.1"/>
<dbReference type="RefSeq" id="NP_067460.1">
    <property type="nucleotide sequence ID" value="NM_021485.3"/>
</dbReference>
<dbReference type="SMR" id="Q9Z1M4"/>
<dbReference type="FunCoup" id="Q9Z1M4">
    <property type="interactions" value="3700"/>
</dbReference>
<dbReference type="STRING" id="10090.ENSMUSP00000025749"/>
<dbReference type="iPTMnet" id="Q9Z1M4"/>
<dbReference type="PhosphoSitePlus" id="Q9Z1M4"/>
<dbReference type="jPOST" id="Q9Z1M4"/>
<dbReference type="PaxDb" id="10090-ENSMUSP00000025749"/>
<dbReference type="ProteomicsDB" id="263470"/>
<dbReference type="Pumba" id="Q9Z1M4"/>
<dbReference type="Antibodypedia" id="1546">
    <property type="antibodies" value="736 antibodies from 40 providers"/>
</dbReference>
<dbReference type="DNASU" id="58988"/>
<dbReference type="Ensembl" id="ENSMUST00000025749.15">
    <property type="protein sequence ID" value="ENSMUSP00000025749.8"/>
    <property type="gene ID" value="ENSMUSG00000024830.18"/>
</dbReference>
<dbReference type="GeneID" id="58988"/>
<dbReference type="KEGG" id="mmu:58988"/>
<dbReference type="UCSC" id="uc008fzb.1">
    <property type="organism name" value="mouse"/>
</dbReference>
<dbReference type="AGR" id="MGI:1927343"/>
<dbReference type="CTD" id="6199"/>
<dbReference type="MGI" id="MGI:1927343">
    <property type="gene designation" value="Rps6kb2"/>
</dbReference>
<dbReference type="VEuPathDB" id="HostDB:ENSMUSG00000024830"/>
<dbReference type="eggNOG" id="KOG0598">
    <property type="taxonomic scope" value="Eukaryota"/>
</dbReference>
<dbReference type="GeneTree" id="ENSGT00940000155062"/>
<dbReference type="InParanoid" id="Q9Z1M4"/>
<dbReference type="OMA" id="AGTHCIA"/>
<dbReference type="OrthoDB" id="63267at2759"/>
<dbReference type="PhylomeDB" id="Q9Z1M4"/>
<dbReference type="TreeFam" id="TF313438"/>
<dbReference type="BRENDA" id="2.7.11.1">
    <property type="organism ID" value="3474"/>
</dbReference>
<dbReference type="Reactome" id="R-MMU-198693">
    <property type="pathway name" value="AKT phosphorylates targets in the nucleus"/>
</dbReference>
<dbReference type="BioGRID-ORCS" id="58988">
    <property type="hits" value="1 hit in 79 CRISPR screens"/>
</dbReference>
<dbReference type="ChiTaRS" id="Rps6kb2">
    <property type="organism name" value="mouse"/>
</dbReference>
<dbReference type="PRO" id="PR:Q9Z1M4"/>
<dbReference type="Proteomes" id="UP000000589">
    <property type="component" value="Chromosome 19"/>
</dbReference>
<dbReference type="RNAct" id="Q9Z1M4">
    <property type="molecule type" value="protein"/>
</dbReference>
<dbReference type="Bgee" id="ENSMUSG00000024830">
    <property type="expression patterns" value="Expressed in bone marrow and 74 other cell types or tissues"/>
</dbReference>
<dbReference type="ExpressionAtlas" id="Q9Z1M4">
    <property type="expression patterns" value="baseline and differential"/>
</dbReference>
<dbReference type="GO" id="GO:0005737">
    <property type="term" value="C:cytoplasm"/>
    <property type="evidence" value="ECO:0007669"/>
    <property type="project" value="UniProtKB-SubCell"/>
</dbReference>
<dbReference type="GO" id="GO:0005634">
    <property type="term" value="C:nucleus"/>
    <property type="evidence" value="ECO:0007669"/>
    <property type="project" value="UniProtKB-SubCell"/>
</dbReference>
<dbReference type="GO" id="GO:0005524">
    <property type="term" value="F:ATP binding"/>
    <property type="evidence" value="ECO:0007669"/>
    <property type="project" value="UniProtKB-KW"/>
</dbReference>
<dbReference type="GO" id="GO:0042277">
    <property type="term" value="F:peptide binding"/>
    <property type="evidence" value="ECO:0007669"/>
    <property type="project" value="Ensembl"/>
</dbReference>
<dbReference type="GO" id="GO:0004672">
    <property type="term" value="F:protein kinase activity"/>
    <property type="evidence" value="ECO:0000314"/>
    <property type="project" value="MGI"/>
</dbReference>
<dbReference type="GO" id="GO:0106310">
    <property type="term" value="F:protein serine kinase activity"/>
    <property type="evidence" value="ECO:0007669"/>
    <property type="project" value="RHEA"/>
</dbReference>
<dbReference type="GO" id="GO:0004711">
    <property type="term" value="F:ribosomal protein S6 kinase activity"/>
    <property type="evidence" value="ECO:0007669"/>
    <property type="project" value="Ensembl"/>
</dbReference>
<dbReference type="GO" id="GO:0046627">
    <property type="term" value="P:negative regulation of insulin receptor signaling pathway"/>
    <property type="evidence" value="ECO:0000316"/>
    <property type="project" value="MGI"/>
</dbReference>
<dbReference type="GO" id="GO:0045948">
    <property type="term" value="P:positive regulation of translational initiation"/>
    <property type="evidence" value="ECO:0007669"/>
    <property type="project" value="Ensembl"/>
</dbReference>
<dbReference type="GO" id="GO:0031929">
    <property type="term" value="P:TOR signaling"/>
    <property type="evidence" value="ECO:0000250"/>
    <property type="project" value="UniProtKB"/>
</dbReference>
<dbReference type="CDD" id="cd05584">
    <property type="entry name" value="STKc_p70S6K"/>
    <property type="match status" value="1"/>
</dbReference>
<dbReference type="FunFam" id="3.30.200.20:FF:000587">
    <property type="entry name" value="Non-specific serine/threonine protein kinase"/>
    <property type="match status" value="1"/>
</dbReference>
<dbReference type="FunFam" id="1.10.510.10:FF:000092">
    <property type="entry name" value="Ribosomal protein S6 kinase"/>
    <property type="match status" value="1"/>
</dbReference>
<dbReference type="Gene3D" id="3.30.200.20">
    <property type="entry name" value="Phosphorylase Kinase, domain 1"/>
    <property type="match status" value="1"/>
</dbReference>
<dbReference type="Gene3D" id="1.10.510.10">
    <property type="entry name" value="Transferase(Phosphotransferase) domain 1"/>
    <property type="match status" value="1"/>
</dbReference>
<dbReference type="InterPro" id="IPR000961">
    <property type="entry name" value="AGC-kinase_C"/>
</dbReference>
<dbReference type="InterPro" id="IPR011009">
    <property type="entry name" value="Kinase-like_dom_sf"/>
</dbReference>
<dbReference type="InterPro" id="IPR017892">
    <property type="entry name" value="Pkinase_C"/>
</dbReference>
<dbReference type="InterPro" id="IPR000719">
    <property type="entry name" value="Prot_kinase_dom"/>
</dbReference>
<dbReference type="InterPro" id="IPR017441">
    <property type="entry name" value="Protein_kinase_ATP_BS"/>
</dbReference>
<dbReference type="InterPro" id="IPR008271">
    <property type="entry name" value="Ser/Thr_kinase_AS"/>
</dbReference>
<dbReference type="PANTHER" id="PTHR24351">
    <property type="entry name" value="RIBOSOMAL PROTEIN S6 KINASE"/>
    <property type="match status" value="1"/>
</dbReference>
<dbReference type="Pfam" id="PF00069">
    <property type="entry name" value="Pkinase"/>
    <property type="match status" value="1"/>
</dbReference>
<dbReference type="Pfam" id="PF00433">
    <property type="entry name" value="Pkinase_C"/>
    <property type="match status" value="1"/>
</dbReference>
<dbReference type="SMART" id="SM00133">
    <property type="entry name" value="S_TK_X"/>
    <property type="match status" value="1"/>
</dbReference>
<dbReference type="SMART" id="SM00220">
    <property type="entry name" value="S_TKc"/>
    <property type="match status" value="1"/>
</dbReference>
<dbReference type="SUPFAM" id="SSF56112">
    <property type="entry name" value="Protein kinase-like (PK-like)"/>
    <property type="match status" value="1"/>
</dbReference>
<dbReference type="PROSITE" id="PS51285">
    <property type="entry name" value="AGC_KINASE_CTER"/>
    <property type="match status" value="1"/>
</dbReference>
<dbReference type="PROSITE" id="PS00107">
    <property type="entry name" value="PROTEIN_KINASE_ATP"/>
    <property type="match status" value="1"/>
</dbReference>
<dbReference type="PROSITE" id="PS50011">
    <property type="entry name" value="PROTEIN_KINASE_DOM"/>
    <property type="match status" value="1"/>
</dbReference>
<dbReference type="PROSITE" id="PS00108">
    <property type="entry name" value="PROTEIN_KINASE_ST"/>
    <property type="match status" value="1"/>
</dbReference>
<name>KS6B2_MOUSE</name>
<keyword id="KW-0067">ATP-binding</keyword>
<keyword id="KW-0963">Cytoplasm</keyword>
<keyword id="KW-0418">Kinase</keyword>
<keyword id="KW-0547">Nucleotide-binding</keyword>
<keyword id="KW-0539">Nucleus</keyword>
<keyword id="KW-0597">Phosphoprotein</keyword>
<keyword id="KW-1185">Reference proteome</keyword>
<keyword id="KW-0723">Serine/threonine-protein kinase</keyword>
<keyword id="KW-0808">Transferase</keyword>